<feature type="chain" id="PRO_1000051190" description="Small ribosomal subunit protein uS9">
    <location>
        <begin position="1"/>
        <end position="130"/>
    </location>
</feature>
<evidence type="ECO:0000255" key="1">
    <source>
        <dbReference type="HAMAP-Rule" id="MF_00532"/>
    </source>
</evidence>
<evidence type="ECO:0000305" key="2"/>
<accession>Q63QW4</accession>
<proteinExistence type="inferred from homology"/>
<keyword id="KW-1185">Reference proteome</keyword>
<keyword id="KW-0687">Ribonucleoprotein</keyword>
<keyword id="KW-0689">Ribosomal protein</keyword>
<comment type="similarity">
    <text evidence="1">Belongs to the universal ribosomal protein uS9 family.</text>
</comment>
<reference key="1">
    <citation type="journal article" date="2004" name="Proc. Natl. Acad. Sci. U.S.A.">
        <title>Genomic plasticity of the causative agent of melioidosis, Burkholderia pseudomallei.</title>
        <authorList>
            <person name="Holden M.T.G."/>
            <person name="Titball R.W."/>
            <person name="Peacock S.J."/>
            <person name="Cerdeno-Tarraga A.-M."/>
            <person name="Atkins T."/>
            <person name="Crossman L.C."/>
            <person name="Pitt T."/>
            <person name="Churcher C."/>
            <person name="Mungall K.L."/>
            <person name="Bentley S.D."/>
            <person name="Sebaihia M."/>
            <person name="Thomson N.R."/>
            <person name="Bason N."/>
            <person name="Beacham I.R."/>
            <person name="Brooks K."/>
            <person name="Brown K.A."/>
            <person name="Brown N.F."/>
            <person name="Challis G.L."/>
            <person name="Cherevach I."/>
            <person name="Chillingworth T."/>
            <person name="Cronin A."/>
            <person name="Crossett B."/>
            <person name="Davis P."/>
            <person name="DeShazer D."/>
            <person name="Feltwell T."/>
            <person name="Fraser A."/>
            <person name="Hance Z."/>
            <person name="Hauser H."/>
            <person name="Holroyd S."/>
            <person name="Jagels K."/>
            <person name="Keith K.E."/>
            <person name="Maddison M."/>
            <person name="Moule S."/>
            <person name="Price C."/>
            <person name="Quail M.A."/>
            <person name="Rabbinowitsch E."/>
            <person name="Rutherford K."/>
            <person name="Sanders M."/>
            <person name="Simmonds M."/>
            <person name="Songsivilai S."/>
            <person name="Stevens K."/>
            <person name="Tumapa S."/>
            <person name="Vesaratchavest M."/>
            <person name="Whitehead S."/>
            <person name="Yeats C."/>
            <person name="Barrell B.G."/>
            <person name="Oyston P.C.F."/>
            <person name="Parkhill J."/>
        </authorList>
    </citation>
    <scope>NUCLEOTIDE SEQUENCE [LARGE SCALE GENOMIC DNA]</scope>
    <source>
        <strain>K96243</strain>
    </source>
</reference>
<sequence>MIGNWNYGTGRRKSAVARVFIKAGKGDIVVNGKPISDYFSRETSLMIVRQPLELTNHAQTFDIKVNVSGGGETGQAGAVRHGITRALIDYDATLKPALSKAGFVTRDAREVERKKVGLHKARRAKQFSKR</sequence>
<protein>
    <recommendedName>
        <fullName evidence="1">Small ribosomal subunit protein uS9</fullName>
    </recommendedName>
    <alternativeName>
        <fullName evidence="2">30S ribosomal protein S9</fullName>
    </alternativeName>
</protein>
<dbReference type="EMBL" id="BX571965">
    <property type="protein sequence ID" value="CAH36920.1"/>
    <property type="molecule type" value="Genomic_DNA"/>
</dbReference>
<dbReference type="RefSeq" id="WP_004549989.1">
    <property type="nucleotide sequence ID" value="NZ_CP009538.1"/>
</dbReference>
<dbReference type="RefSeq" id="YP_109504.1">
    <property type="nucleotide sequence ID" value="NC_006350.1"/>
</dbReference>
<dbReference type="SMR" id="Q63QW4"/>
<dbReference type="STRING" id="272560.BPSL2910"/>
<dbReference type="KEGG" id="bps:BPSL2910"/>
<dbReference type="PATRIC" id="fig|272560.51.peg.2379"/>
<dbReference type="eggNOG" id="COG0103">
    <property type="taxonomic scope" value="Bacteria"/>
</dbReference>
<dbReference type="Proteomes" id="UP000000605">
    <property type="component" value="Chromosome 1"/>
</dbReference>
<dbReference type="GO" id="GO:0022627">
    <property type="term" value="C:cytosolic small ribosomal subunit"/>
    <property type="evidence" value="ECO:0007669"/>
    <property type="project" value="TreeGrafter"/>
</dbReference>
<dbReference type="GO" id="GO:0003723">
    <property type="term" value="F:RNA binding"/>
    <property type="evidence" value="ECO:0007669"/>
    <property type="project" value="TreeGrafter"/>
</dbReference>
<dbReference type="GO" id="GO:0003735">
    <property type="term" value="F:structural constituent of ribosome"/>
    <property type="evidence" value="ECO:0007669"/>
    <property type="project" value="InterPro"/>
</dbReference>
<dbReference type="GO" id="GO:0006412">
    <property type="term" value="P:translation"/>
    <property type="evidence" value="ECO:0007669"/>
    <property type="project" value="UniProtKB-UniRule"/>
</dbReference>
<dbReference type="FunFam" id="3.30.230.10:FF:000001">
    <property type="entry name" value="30S ribosomal protein S9"/>
    <property type="match status" value="1"/>
</dbReference>
<dbReference type="Gene3D" id="3.30.230.10">
    <property type="match status" value="1"/>
</dbReference>
<dbReference type="HAMAP" id="MF_00532_B">
    <property type="entry name" value="Ribosomal_uS9_B"/>
    <property type="match status" value="1"/>
</dbReference>
<dbReference type="InterPro" id="IPR020568">
    <property type="entry name" value="Ribosomal_Su5_D2-typ_SF"/>
</dbReference>
<dbReference type="InterPro" id="IPR000754">
    <property type="entry name" value="Ribosomal_uS9"/>
</dbReference>
<dbReference type="InterPro" id="IPR023035">
    <property type="entry name" value="Ribosomal_uS9_bac/plastid"/>
</dbReference>
<dbReference type="InterPro" id="IPR020574">
    <property type="entry name" value="Ribosomal_uS9_CS"/>
</dbReference>
<dbReference type="InterPro" id="IPR014721">
    <property type="entry name" value="Ribsml_uS5_D2-typ_fold_subgr"/>
</dbReference>
<dbReference type="NCBIfam" id="NF001099">
    <property type="entry name" value="PRK00132.1"/>
    <property type="match status" value="1"/>
</dbReference>
<dbReference type="PANTHER" id="PTHR21569">
    <property type="entry name" value="RIBOSOMAL PROTEIN S9"/>
    <property type="match status" value="1"/>
</dbReference>
<dbReference type="PANTHER" id="PTHR21569:SF1">
    <property type="entry name" value="SMALL RIBOSOMAL SUBUNIT PROTEIN US9M"/>
    <property type="match status" value="1"/>
</dbReference>
<dbReference type="Pfam" id="PF00380">
    <property type="entry name" value="Ribosomal_S9"/>
    <property type="match status" value="1"/>
</dbReference>
<dbReference type="SUPFAM" id="SSF54211">
    <property type="entry name" value="Ribosomal protein S5 domain 2-like"/>
    <property type="match status" value="1"/>
</dbReference>
<dbReference type="PROSITE" id="PS00360">
    <property type="entry name" value="RIBOSOMAL_S9"/>
    <property type="match status" value="1"/>
</dbReference>
<gene>
    <name evidence="1" type="primary">rpsI</name>
    <name type="ordered locus">BPSL2910</name>
</gene>
<organism>
    <name type="scientific">Burkholderia pseudomallei (strain K96243)</name>
    <dbReference type="NCBI Taxonomy" id="272560"/>
    <lineage>
        <taxon>Bacteria</taxon>
        <taxon>Pseudomonadati</taxon>
        <taxon>Pseudomonadota</taxon>
        <taxon>Betaproteobacteria</taxon>
        <taxon>Burkholderiales</taxon>
        <taxon>Burkholderiaceae</taxon>
        <taxon>Burkholderia</taxon>
        <taxon>pseudomallei group</taxon>
    </lineage>
</organism>
<name>RS9_BURPS</name>